<accession>B4TSF8</accession>
<dbReference type="EMBL" id="CP001127">
    <property type="protein sequence ID" value="ACF89856.1"/>
    <property type="molecule type" value="Genomic_DNA"/>
</dbReference>
<dbReference type="RefSeq" id="WP_001177632.1">
    <property type="nucleotide sequence ID" value="NC_011094.1"/>
</dbReference>
<dbReference type="SMR" id="B4TSF8"/>
<dbReference type="KEGG" id="sew:SeSA_A4635"/>
<dbReference type="HOGENOM" id="CLU_107144_2_1_6"/>
<dbReference type="Proteomes" id="UP000001865">
    <property type="component" value="Chromosome"/>
</dbReference>
<dbReference type="GO" id="GO:0005829">
    <property type="term" value="C:cytosol"/>
    <property type="evidence" value="ECO:0007669"/>
    <property type="project" value="TreeGrafter"/>
</dbReference>
<dbReference type="GO" id="GO:0051537">
    <property type="term" value="F:2 iron, 2 sulfur cluster binding"/>
    <property type="evidence" value="ECO:0007669"/>
    <property type="project" value="UniProtKB-KW"/>
</dbReference>
<dbReference type="GO" id="GO:0003700">
    <property type="term" value="F:DNA-binding transcription factor activity"/>
    <property type="evidence" value="ECO:0007669"/>
    <property type="project" value="UniProtKB-UniRule"/>
</dbReference>
<dbReference type="GO" id="GO:0003690">
    <property type="term" value="F:double-stranded DNA binding"/>
    <property type="evidence" value="ECO:0007669"/>
    <property type="project" value="UniProtKB-UniRule"/>
</dbReference>
<dbReference type="GO" id="GO:0005506">
    <property type="term" value="F:iron ion binding"/>
    <property type="evidence" value="ECO:0007669"/>
    <property type="project" value="UniProtKB-UniRule"/>
</dbReference>
<dbReference type="GO" id="GO:0045892">
    <property type="term" value="P:negative regulation of DNA-templated transcription"/>
    <property type="evidence" value="ECO:0007669"/>
    <property type="project" value="InterPro"/>
</dbReference>
<dbReference type="FunFam" id="1.10.10.10:FF:000105">
    <property type="entry name" value="HTH-type transcriptional repressor NsrR"/>
    <property type="match status" value="1"/>
</dbReference>
<dbReference type="Gene3D" id="1.10.10.10">
    <property type="entry name" value="Winged helix-like DNA-binding domain superfamily/Winged helix DNA-binding domain"/>
    <property type="match status" value="1"/>
</dbReference>
<dbReference type="HAMAP" id="MF_01177">
    <property type="entry name" value="HTH_type_NsrR"/>
    <property type="match status" value="1"/>
</dbReference>
<dbReference type="InterPro" id="IPR000944">
    <property type="entry name" value="Tscrpt_reg_Rrf2"/>
</dbReference>
<dbReference type="InterPro" id="IPR023761">
    <property type="entry name" value="Tscrpt_rep_HTH_NsrR"/>
</dbReference>
<dbReference type="InterPro" id="IPR036388">
    <property type="entry name" value="WH-like_DNA-bd_sf"/>
</dbReference>
<dbReference type="InterPro" id="IPR036390">
    <property type="entry name" value="WH_DNA-bd_sf"/>
</dbReference>
<dbReference type="NCBIfam" id="NF008240">
    <property type="entry name" value="PRK11014.1"/>
    <property type="match status" value="1"/>
</dbReference>
<dbReference type="NCBIfam" id="TIGR00738">
    <property type="entry name" value="rrf2_super"/>
    <property type="match status" value="1"/>
</dbReference>
<dbReference type="PANTHER" id="PTHR33221:SF4">
    <property type="entry name" value="HTH-TYPE TRANSCRIPTIONAL REPRESSOR NSRR"/>
    <property type="match status" value="1"/>
</dbReference>
<dbReference type="PANTHER" id="PTHR33221">
    <property type="entry name" value="WINGED HELIX-TURN-HELIX TRANSCRIPTIONAL REGULATOR, RRF2 FAMILY"/>
    <property type="match status" value="1"/>
</dbReference>
<dbReference type="Pfam" id="PF02082">
    <property type="entry name" value="Rrf2"/>
    <property type="match status" value="1"/>
</dbReference>
<dbReference type="SUPFAM" id="SSF46785">
    <property type="entry name" value="Winged helix' DNA-binding domain"/>
    <property type="match status" value="1"/>
</dbReference>
<dbReference type="PROSITE" id="PS51197">
    <property type="entry name" value="HTH_RRF2_2"/>
    <property type="match status" value="1"/>
</dbReference>
<sequence>MQLTSFTDYGLRALIYMASLPDGRMTSISEVTEVYGVSRNHMVKIINQLSRAGFVTAVRGKNGGIRLGKPANTICIGDVVRELEPLSLVNCSSEFCHITPACRLKQALSKAVQSFLKELDNYTLADLVEENQPLYKLLLVE</sequence>
<organism>
    <name type="scientific">Salmonella schwarzengrund (strain CVM19633)</name>
    <dbReference type="NCBI Taxonomy" id="439843"/>
    <lineage>
        <taxon>Bacteria</taxon>
        <taxon>Pseudomonadati</taxon>
        <taxon>Pseudomonadota</taxon>
        <taxon>Gammaproteobacteria</taxon>
        <taxon>Enterobacterales</taxon>
        <taxon>Enterobacteriaceae</taxon>
        <taxon>Salmonella</taxon>
    </lineage>
</organism>
<protein>
    <recommendedName>
        <fullName evidence="1">HTH-type transcriptional repressor NsrR</fullName>
    </recommendedName>
</protein>
<proteinExistence type="inferred from homology"/>
<gene>
    <name evidence="1" type="primary">nsrR</name>
    <name type="ordered locus">SeSA_A4635</name>
</gene>
<name>NSRR_SALSV</name>
<reference key="1">
    <citation type="journal article" date="2011" name="J. Bacteriol.">
        <title>Comparative genomics of 28 Salmonella enterica isolates: evidence for CRISPR-mediated adaptive sublineage evolution.</title>
        <authorList>
            <person name="Fricke W.F."/>
            <person name="Mammel M.K."/>
            <person name="McDermott P.F."/>
            <person name="Tartera C."/>
            <person name="White D.G."/>
            <person name="Leclerc J.E."/>
            <person name="Ravel J."/>
            <person name="Cebula T.A."/>
        </authorList>
    </citation>
    <scope>NUCLEOTIDE SEQUENCE [LARGE SCALE GENOMIC DNA]</scope>
    <source>
        <strain>CVM19633</strain>
    </source>
</reference>
<evidence type="ECO:0000255" key="1">
    <source>
        <dbReference type="HAMAP-Rule" id="MF_01177"/>
    </source>
</evidence>
<keyword id="KW-0001">2Fe-2S</keyword>
<keyword id="KW-0238">DNA-binding</keyword>
<keyword id="KW-0408">Iron</keyword>
<keyword id="KW-0411">Iron-sulfur</keyword>
<keyword id="KW-0479">Metal-binding</keyword>
<keyword id="KW-0678">Repressor</keyword>
<keyword id="KW-0804">Transcription</keyword>
<keyword id="KW-0805">Transcription regulation</keyword>
<comment type="function">
    <text evidence="1">Nitric oxide-sensitive repressor of genes involved in protecting the cell against nitrosative stress. May require iron for activity.</text>
</comment>
<comment type="cofactor">
    <cofactor evidence="1">
        <name>[2Fe-2S] cluster</name>
        <dbReference type="ChEBI" id="CHEBI:190135"/>
    </cofactor>
    <text evidence="1">Binds 1 [2Fe-2S] cluster per subunit.</text>
</comment>
<feature type="chain" id="PRO_1000138131" description="HTH-type transcriptional repressor NsrR">
    <location>
        <begin position="1"/>
        <end position="141"/>
    </location>
</feature>
<feature type="domain" description="HTH rrf2-type" evidence="1">
    <location>
        <begin position="2"/>
        <end position="129"/>
    </location>
</feature>
<feature type="DNA-binding region" description="H-T-H motif" evidence="1">
    <location>
        <begin position="28"/>
        <end position="51"/>
    </location>
</feature>
<feature type="binding site" evidence="1">
    <location>
        <position position="91"/>
    </location>
    <ligand>
        <name>[2Fe-2S] cluster</name>
        <dbReference type="ChEBI" id="CHEBI:190135"/>
    </ligand>
</feature>
<feature type="binding site" evidence="1">
    <location>
        <position position="96"/>
    </location>
    <ligand>
        <name>[2Fe-2S] cluster</name>
        <dbReference type="ChEBI" id="CHEBI:190135"/>
    </ligand>
</feature>
<feature type="binding site" evidence="1">
    <location>
        <position position="102"/>
    </location>
    <ligand>
        <name>[2Fe-2S] cluster</name>
        <dbReference type="ChEBI" id="CHEBI:190135"/>
    </ligand>
</feature>